<accession>A8AD10</accession>
<comment type="function">
    <text evidence="1">Specifically methylates the adenine in position 37 of tRNA(1)(Val) (anticodon cmo5UAC).</text>
</comment>
<comment type="catalytic activity">
    <reaction evidence="1">
        <text>adenosine(37) in tRNA1(Val) + S-adenosyl-L-methionine = N(6)-methyladenosine(37) in tRNA1(Val) + S-adenosyl-L-homocysteine + H(+)</text>
        <dbReference type="Rhea" id="RHEA:43160"/>
        <dbReference type="Rhea" id="RHEA-COMP:10369"/>
        <dbReference type="Rhea" id="RHEA-COMP:10370"/>
        <dbReference type="ChEBI" id="CHEBI:15378"/>
        <dbReference type="ChEBI" id="CHEBI:57856"/>
        <dbReference type="ChEBI" id="CHEBI:59789"/>
        <dbReference type="ChEBI" id="CHEBI:74411"/>
        <dbReference type="ChEBI" id="CHEBI:74449"/>
        <dbReference type="EC" id="2.1.1.223"/>
    </reaction>
</comment>
<comment type="subcellular location">
    <subcellularLocation>
        <location evidence="1">Cytoplasm</location>
    </subcellularLocation>
</comment>
<comment type="similarity">
    <text evidence="1">Belongs to the methyltransferase superfamily. tRNA (adenine-N(6)-)-methyltransferase family.</text>
</comment>
<comment type="sequence caution" evidence="2">
    <conflict type="erroneous initiation">
        <sequence resource="EMBL-CDS" id="ABV11373"/>
    </conflict>
</comment>
<protein>
    <recommendedName>
        <fullName evidence="1">tRNA1(Val) (adenine(37)-N6)-methyltransferase</fullName>
        <ecNumber evidence="1">2.1.1.223</ecNumber>
    </recommendedName>
    <alternativeName>
        <fullName evidence="1">tRNA m6A37 methyltransferase</fullName>
    </alternativeName>
</protein>
<gene>
    <name type="ordered locus">CKO_00207</name>
</gene>
<organism>
    <name type="scientific">Citrobacter koseri (strain ATCC BAA-895 / CDC 4225-83 / SGSC4696)</name>
    <dbReference type="NCBI Taxonomy" id="290338"/>
    <lineage>
        <taxon>Bacteria</taxon>
        <taxon>Pseudomonadati</taxon>
        <taxon>Pseudomonadota</taxon>
        <taxon>Gammaproteobacteria</taxon>
        <taxon>Enterobacterales</taxon>
        <taxon>Enterobacteriaceae</taxon>
        <taxon>Citrobacter</taxon>
    </lineage>
</organism>
<keyword id="KW-0963">Cytoplasm</keyword>
<keyword id="KW-0489">Methyltransferase</keyword>
<keyword id="KW-1185">Reference proteome</keyword>
<keyword id="KW-0949">S-adenosyl-L-methionine</keyword>
<keyword id="KW-0808">Transferase</keyword>
<keyword id="KW-0819">tRNA processing</keyword>
<name>TRMN6_CITK8</name>
<dbReference type="EC" id="2.1.1.223" evidence="1"/>
<dbReference type="EMBL" id="CP000822">
    <property type="protein sequence ID" value="ABV11373.1"/>
    <property type="status" value="ALT_INIT"/>
    <property type="molecule type" value="Genomic_DNA"/>
</dbReference>
<dbReference type="SMR" id="A8AD10"/>
<dbReference type="STRING" id="290338.CKO_00207"/>
<dbReference type="GeneID" id="45134497"/>
<dbReference type="KEGG" id="cko:CKO_00207"/>
<dbReference type="HOGENOM" id="CLU_061983_0_0_6"/>
<dbReference type="OrthoDB" id="5383291at2"/>
<dbReference type="Proteomes" id="UP000008148">
    <property type="component" value="Chromosome"/>
</dbReference>
<dbReference type="GO" id="GO:0005737">
    <property type="term" value="C:cytoplasm"/>
    <property type="evidence" value="ECO:0007669"/>
    <property type="project" value="UniProtKB-SubCell"/>
</dbReference>
<dbReference type="GO" id="GO:0003676">
    <property type="term" value="F:nucleic acid binding"/>
    <property type="evidence" value="ECO:0007669"/>
    <property type="project" value="InterPro"/>
</dbReference>
<dbReference type="GO" id="GO:0016430">
    <property type="term" value="F:tRNA (adenine-N6)-methyltransferase activity"/>
    <property type="evidence" value="ECO:0007669"/>
    <property type="project" value="UniProtKB-UniRule"/>
</dbReference>
<dbReference type="GO" id="GO:0032259">
    <property type="term" value="P:methylation"/>
    <property type="evidence" value="ECO:0007669"/>
    <property type="project" value="UniProtKB-KW"/>
</dbReference>
<dbReference type="GO" id="GO:0008033">
    <property type="term" value="P:tRNA processing"/>
    <property type="evidence" value="ECO:0007669"/>
    <property type="project" value="UniProtKB-UniRule"/>
</dbReference>
<dbReference type="CDD" id="cd02440">
    <property type="entry name" value="AdoMet_MTases"/>
    <property type="match status" value="1"/>
</dbReference>
<dbReference type="Gene3D" id="3.40.50.150">
    <property type="entry name" value="Vaccinia Virus protein VP39"/>
    <property type="match status" value="1"/>
</dbReference>
<dbReference type="HAMAP" id="MF_01872">
    <property type="entry name" value="tRNA_methyltr_YfiC"/>
    <property type="match status" value="1"/>
</dbReference>
<dbReference type="InterPro" id="IPR002052">
    <property type="entry name" value="DNA_methylase_N6_adenine_CS"/>
</dbReference>
<dbReference type="InterPro" id="IPR029063">
    <property type="entry name" value="SAM-dependent_MTases_sf"/>
</dbReference>
<dbReference type="InterPro" id="IPR007848">
    <property type="entry name" value="Small_mtfrase_dom"/>
</dbReference>
<dbReference type="InterPro" id="IPR050210">
    <property type="entry name" value="tRNA_Adenine-N(6)_MTase"/>
</dbReference>
<dbReference type="InterPro" id="IPR022882">
    <property type="entry name" value="tRNA_adenine-N6_MeTrfase"/>
</dbReference>
<dbReference type="NCBIfam" id="NF047853">
    <property type="entry name" value="tRm6a37MtseTrmN"/>
    <property type="match status" value="1"/>
</dbReference>
<dbReference type="PANTHER" id="PTHR47739">
    <property type="entry name" value="TRNA1(VAL) (ADENINE(37)-N6)-METHYLTRANSFERASE"/>
    <property type="match status" value="1"/>
</dbReference>
<dbReference type="PANTHER" id="PTHR47739:SF1">
    <property type="entry name" value="TRNA1(VAL) (ADENINE(37)-N6)-METHYLTRANSFERASE"/>
    <property type="match status" value="1"/>
</dbReference>
<dbReference type="Pfam" id="PF05175">
    <property type="entry name" value="MTS"/>
    <property type="match status" value="1"/>
</dbReference>
<dbReference type="SUPFAM" id="SSF53335">
    <property type="entry name" value="S-adenosyl-L-methionine-dependent methyltransferases"/>
    <property type="match status" value="1"/>
</dbReference>
<dbReference type="PROSITE" id="PS00092">
    <property type="entry name" value="N6_MTASE"/>
    <property type="match status" value="1"/>
</dbReference>
<feature type="chain" id="PRO_0000387345" description="tRNA1(Val) (adenine(37)-N6)-methyltransferase">
    <location>
        <begin position="1"/>
        <end position="245"/>
    </location>
</feature>
<evidence type="ECO:0000255" key="1">
    <source>
        <dbReference type="HAMAP-Rule" id="MF_01872"/>
    </source>
</evidence>
<evidence type="ECO:0000305" key="2"/>
<sequence length="245" mass="27408">MSQSTSTLRRNGFTFKQFFVAHDRCAMKVGTDGILLGAWAPVAGVTRILDIGTGSGLLALMLAQRTDESVTIDAVELDSEAATQAQENIAHSPWPQRITVHTEDVRQWVPRQTARFDLIISNPPYYEQGVECATPQREQARYTTTLDHEALLTTAAECITEEGFFCVVLPEQTGNTFTQQALSMGWHLRLRTDVAETESRLPHRVLLAFSPRTGECFSDRLVIRGPDQLYSEGYTALTQAFYLFM</sequence>
<reference key="1">
    <citation type="submission" date="2007-08" db="EMBL/GenBank/DDBJ databases">
        <authorList>
            <consortium name="The Citrobacter koseri Genome Sequencing Project"/>
            <person name="McClelland M."/>
            <person name="Sanderson E.K."/>
            <person name="Porwollik S."/>
            <person name="Spieth J."/>
            <person name="Clifton W.S."/>
            <person name="Latreille P."/>
            <person name="Courtney L."/>
            <person name="Wang C."/>
            <person name="Pepin K."/>
            <person name="Bhonagiri V."/>
            <person name="Nash W."/>
            <person name="Johnson M."/>
            <person name="Thiruvilangam P."/>
            <person name="Wilson R."/>
        </authorList>
    </citation>
    <scope>NUCLEOTIDE SEQUENCE [LARGE SCALE GENOMIC DNA]</scope>
    <source>
        <strain>ATCC BAA-895 / CDC 4225-83 / SGSC4696</strain>
    </source>
</reference>
<proteinExistence type="inferred from homology"/>